<dbReference type="EC" id="2.1.1.-" evidence="1"/>
<dbReference type="EMBL" id="AM181176">
    <property type="protein sequence ID" value="CAY46885.1"/>
    <property type="molecule type" value="Genomic_DNA"/>
</dbReference>
<dbReference type="RefSeq" id="WP_010213491.1">
    <property type="nucleotide sequence ID" value="NC_012660.1"/>
</dbReference>
<dbReference type="SMR" id="C3K6W5"/>
<dbReference type="STRING" id="294.SRM1_00684"/>
<dbReference type="GeneID" id="93462213"/>
<dbReference type="eggNOG" id="COG2264">
    <property type="taxonomic scope" value="Bacteria"/>
</dbReference>
<dbReference type="HOGENOM" id="CLU_049382_4_1_6"/>
<dbReference type="OrthoDB" id="9785995at2"/>
<dbReference type="GO" id="GO:0005829">
    <property type="term" value="C:cytosol"/>
    <property type="evidence" value="ECO:0007669"/>
    <property type="project" value="TreeGrafter"/>
</dbReference>
<dbReference type="GO" id="GO:0016279">
    <property type="term" value="F:protein-lysine N-methyltransferase activity"/>
    <property type="evidence" value="ECO:0007669"/>
    <property type="project" value="TreeGrafter"/>
</dbReference>
<dbReference type="GO" id="GO:0032259">
    <property type="term" value="P:methylation"/>
    <property type="evidence" value="ECO:0007669"/>
    <property type="project" value="UniProtKB-KW"/>
</dbReference>
<dbReference type="CDD" id="cd02440">
    <property type="entry name" value="AdoMet_MTases"/>
    <property type="match status" value="1"/>
</dbReference>
<dbReference type="Gene3D" id="3.40.50.150">
    <property type="entry name" value="Vaccinia Virus protein VP39"/>
    <property type="match status" value="1"/>
</dbReference>
<dbReference type="HAMAP" id="MF_00735">
    <property type="entry name" value="Methyltr_PrmA"/>
    <property type="match status" value="1"/>
</dbReference>
<dbReference type="InterPro" id="IPR050078">
    <property type="entry name" value="Ribosomal_L11_MeTrfase_PrmA"/>
</dbReference>
<dbReference type="InterPro" id="IPR004498">
    <property type="entry name" value="Ribosomal_PrmA_MeTrfase"/>
</dbReference>
<dbReference type="InterPro" id="IPR029063">
    <property type="entry name" value="SAM-dependent_MTases_sf"/>
</dbReference>
<dbReference type="NCBIfam" id="TIGR00406">
    <property type="entry name" value="prmA"/>
    <property type="match status" value="1"/>
</dbReference>
<dbReference type="PANTHER" id="PTHR43648">
    <property type="entry name" value="ELECTRON TRANSFER FLAVOPROTEIN BETA SUBUNIT LYSINE METHYLTRANSFERASE"/>
    <property type="match status" value="1"/>
</dbReference>
<dbReference type="PANTHER" id="PTHR43648:SF1">
    <property type="entry name" value="ELECTRON TRANSFER FLAVOPROTEIN BETA SUBUNIT LYSINE METHYLTRANSFERASE"/>
    <property type="match status" value="1"/>
</dbReference>
<dbReference type="Pfam" id="PF06325">
    <property type="entry name" value="PrmA"/>
    <property type="match status" value="1"/>
</dbReference>
<dbReference type="PIRSF" id="PIRSF000401">
    <property type="entry name" value="RPL11_MTase"/>
    <property type="match status" value="1"/>
</dbReference>
<dbReference type="SUPFAM" id="SSF53335">
    <property type="entry name" value="S-adenosyl-L-methionine-dependent methyltransferases"/>
    <property type="match status" value="1"/>
</dbReference>
<protein>
    <recommendedName>
        <fullName evidence="1">Ribosomal protein L11 methyltransferase</fullName>
        <shortName evidence="1">L11 Mtase</shortName>
        <ecNumber evidence="1">2.1.1.-</ecNumber>
    </recommendedName>
</protein>
<evidence type="ECO:0000255" key="1">
    <source>
        <dbReference type="HAMAP-Rule" id="MF_00735"/>
    </source>
</evidence>
<gene>
    <name evidence="1" type="primary">prmA</name>
    <name type="ordered locus">PFLU_0616</name>
</gene>
<keyword id="KW-0963">Cytoplasm</keyword>
<keyword id="KW-0489">Methyltransferase</keyword>
<keyword id="KW-0949">S-adenosyl-L-methionine</keyword>
<keyword id="KW-0808">Transferase</keyword>
<proteinExistence type="inferred from homology"/>
<feature type="chain" id="PRO_1000212755" description="Ribosomal protein L11 methyltransferase">
    <location>
        <begin position="1"/>
        <end position="292"/>
    </location>
</feature>
<feature type="binding site" evidence="1">
    <location>
        <position position="144"/>
    </location>
    <ligand>
        <name>S-adenosyl-L-methionine</name>
        <dbReference type="ChEBI" id="CHEBI:59789"/>
    </ligand>
</feature>
<feature type="binding site" evidence="1">
    <location>
        <position position="165"/>
    </location>
    <ligand>
        <name>S-adenosyl-L-methionine</name>
        <dbReference type="ChEBI" id="CHEBI:59789"/>
    </ligand>
</feature>
<feature type="binding site" evidence="1">
    <location>
        <position position="187"/>
    </location>
    <ligand>
        <name>S-adenosyl-L-methionine</name>
        <dbReference type="ChEBI" id="CHEBI:59789"/>
    </ligand>
</feature>
<feature type="binding site" evidence="1">
    <location>
        <position position="229"/>
    </location>
    <ligand>
        <name>S-adenosyl-L-methionine</name>
        <dbReference type="ChEBI" id="CHEBI:59789"/>
    </ligand>
</feature>
<organism>
    <name type="scientific">Pseudomonas fluorescens (strain SBW25)</name>
    <dbReference type="NCBI Taxonomy" id="216595"/>
    <lineage>
        <taxon>Bacteria</taxon>
        <taxon>Pseudomonadati</taxon>
        <taxon>Pseudomonadota</taxon>
        <taxon>Gammaproteobacteria</taxon>
        <taxon>Pseudomonadales</taxon>
        <taxon>Pseudomonadaceae</taxon>
        <taxon>Pseudomonas</taxon>
    </lineage>
</organism>
<comment type="function">
    <text evidence="1">Methylates ribosomal protein L11.</text>
</comment>
<comment type="catalytic activity">
    <reaction evidence="1">
        <text>L-lysyl-[protein] + 3 S-adenosyl-L-methionine = N(6),N(6),N(6)-trimethyl-L-lysyl-[protein] + 3 S-adenosyl-L-homocysteine + 3 H(+)</text>
        <dbReference type="Rhea" id="RHEA:54192"/>
        <dbReference type="Rhea" id="RHEA-COMP:9752"/>
        <dbReference type="Rhea" id="RHEA-COMP:13826"/>
        <dbReference type="ChEBI" id="CHEBI:15378"/>
        <dbReference type="ChEBI" id="CHEBI:29969"/>
        <dbReference type="ChEBI" id="CHEBI:57856"/>
        <dbReference type="ChEBI" id="CHEBI:59789"/>
        <dbReference type="ChEBI" id="CHEBI:61961"/>
    </reaction>
</comment>
<comment type="subcellular location">
    <subcellularLocation>
        <location evidence="1">Cytoplasm</location>
    </subcellularLocation>
</comment>
<comment type="similarity">
    <text evidence="1">Belongs to the methyltransferase superfamily. PrmA family.</text>
</comment>
<reference key="1">
    <citation type="journal article" date="2009" name="Genome Biol.">
        <title>Genomic and genetic analyses of diversity and plant interactions of Pseudomonas fluorescens.</title>
        <authorList>
            <person name="Silby M.W."/>
            <person name="Cerdeno-Tarraga A.M."/>
            <person name="Vernikos G.S."/>
            <person name="Giddens S.R."/>
            <person name="Jackson R.W."/>
            <person name="Preston G.M."/>
            <person name="Zhang X.-X."/>
            <person name="Moon C.D."/>
            <person name="Gehrig S.M."/>
            <person name="Godfrey S.A.C."/>
            <person name="Knight C.G."/>
            <person name="Malone J.G."/>
            <person name="Robinson Z."/>
            <person name="Spiers A.J."/>
            <person name="Harris S."/>
            <person name="Challis G.L."/>
            <person name="Yaxley A.M."/>
            <person name="Harris D."/>
            <person name="Seeger K."/>
            <person name="Murphy L."/>
            <person name="Rutter S."/>
            <person name="Squares R."/>
            <person name="Quail M.A."/>
            <person name="Saunders E."/>
            <person name="Mavromatis K."/>
            <person name="Brettin T.S."/>
            <person name="Bentley S.D."/>
            <person name="Hothersall J."/>
            <person name="Stephens E."/>
            <person name="Thomas C.M."/>
            <person name="Parkhill J."/>
            <person name="Levy S.B."/>
            <person name="Rainey P.B."/>
            <person name="Thomson N.R."/>
        </authorList>
    </citation>
    <scope>NUCLEOTIDE SEQUENCE [LARGE SCALE GENOMIC DNA]</scope>
    <source>
        <strain>SBW25</strain>
    </source>
</reference>
<accession>C3K6W5</accession>
<sequence>MPWLQVRLAISPEQAETYEDAFLEVGAVSVTFMDAEDQPIFEPELNTTPLWSHTHLLALFEDGTDAAAVLAHMELLTGGPLPEHHSEVIEDQDWERSWMDNFQPMRFGQRLWIVPSWHAAPEPDAVNLLLDPGLAFGTGTHPTTALCLEWLDGQDLTDSHVLDFGCGSGILAIAALLLGAKEAVGTDIDVQALEASRDNAGRNNIPEGKFPLYLPEQLPQVQADVLVANILAGPLVSLAPQLSSLVKPGGRLALSGILAEQGEDVAAAYAKDFELDPIANRDGWVRISGRRR</sequence>
<name>PRMA_PSEFS</name>